<reference key="1">
    <citation type="journal article" date="1998" name="DNA Res.">
        <title>Complete sequence and gene organization of the genome of a hyper-thermophilic archaebacterium, Pyrococcus horikoshii OT3.</title>
        <authorList>
            <person name="Kawarabayasi Y."/>
            <person name="Sawada M."/>
            <person name="Horikawa H."/>
            <person name="Haikawa Y."/>
            <person name="Hino Y."/>
            <person name="Yamamoto S."/>
            <person name="Sekine M."/>
            <person name="Baba S."/>
            <person name="Kosugi H."/>
            <person name="Hosoyama A."/>
            <person name="Nagai Y."/>
            <person name="Sakai M."/>
            <person name="Ogura K."/>
            <person name="Otsuka R."/>
            <person name="Nakazawa H."/>
            <person name="Takamiya M."/>
            <person name="Ohfuku Y."/>
            <person name="Funahashi T."/>
            <person name="Tanaka T."/>
            <person name="Kudoh Y."/>
            <person name="Yamazaki J."/>
            <person name="Kushida N."/>
            <person name="Oguchi A."/>
            <person name="Aoki K."/>
            <person name="Yoshizawa T."/>
            <person name="Nakamura Y."/>
            <person name="Robb F.T."/>
            <person name="Horikoshi K."/>
            <person name="Masuchi Y."/>
            <person name="Shizuya H."/>
            <person name="Kikuchi H."/>
        </authorList>
    </citation>
    <scope>NUCLEOTIDE SEQUENCE [LARGE SCALE GENOMIC DNA]</scope>
    <source>
        <strain>ATCC 700860 / DSM 12428 / JCM 9974 / NBRC 100139 / OT-3</strain>
    </source>
</reference>
<comment type="function">
    <text evidence="1">Catalytic component of the exosome, which is a complex involved in RNA degradation. Has 3'-&gt;5' exoribonuclease activity. Can also synthesize heteromeric RNA-tails.</text>
</comment>
<comment type="subunit">
    <text evidence="1">Component of the archaeal exosome complex. Forms a hexameric ring-like arrangement composed of 3 Rrp41-Rrp42 heterodimers. The hexameric ring associates with a trimer of Rrp4 and/or Csl4 subunits.</text>
</comment>
<comment type="subcellular location">
    <subcellularLocation>
        <location evidence="1">Cytoplasm</location>
    </subcellularLocation>
</comment>
<comment type="similarity">
    <text evidence="1">Belongs to the RNase PH family. Rrp41 subfamily.</text>
</comment>
<evidence type="ECO:0000255" key="1">
    <source>
        <dbReference type="HAMAP-Rule" id="MF_00591"/>
    </source>
</evidence>
<keyword id="KW-0963">Cytoplasm</keyword>
<keyword id="KW-0269">Exonuclease</keyword>
<keyword id="KW-0271">Exosome</keyword>
<keyword id="KW-0378">Hydrolase</keyword>
<keyword id="KW-0540">Nuclease</keyword>
<name>RRP41_PYRHO</name>
<accession>O59223</accession>
<organism>
    <name type="scientific">Pyrococcus horikoshii (strain ATCC 700860 / DSM 12428 / JCM 9974 / NBRC 100139 / OT-3)</name>
    <dbReference type="NCBI Taxonomy" id="70601"/>
    <lineage>
        <taxon>Archaea</taxon>
        <taxon>Methanobacteriati</taxon>
        <taxon>Methanobacteriota</taxon>
        <taxon>Thermococci</taxon>
        <taxon>Thermococcales</taxon>
        <taxon>Thermococcaceae</taxon>
        <taxon>Pyrococcus</taxon>
    </lineage>
</organism>
<proteinExistence type="inferred from homology"/>
<gene>
    <name evidence="1" type="primary">rrp41</name>
    <name type="ordered locus">PH1549</name>
</gene>
<dbReference type="EC" id="3.1.13.-" evidence="1"/>
<dbReference type="EMBL" id="BA000001">
    <property type="protein sequence ID" value="BAA30661.1"/>
    <property type="molecule type" value="Genomic_DNA"/>
</dbReference>
<dbReference type="PIR" id="E71032">
    <property type="entry name" value="E71032"/>
</dbReference>
<dbReference type="RefSeq" id="WP_010885629.1">
    <property type="nucleotide sequence ID" value="NC_000961.1"/>
</dbReference>
<dbReference type="SMR" id="O59223"/>
<dbReference type="STRING" id="70601.gene:9378539"/>
<dbReference type="EnsemblBacteria" id="BAA30661">
    <property type="protein sequence ID" value="BAA30661"/>
    <property type="gene ID" value="BAA30661"/>
</dbReference>
<dbReference type="GeneID" id="1443869"/>
<dbReference type="KEGG" id="pho:PH1549"/>
<dbReference type="eggNOG" id="arCOG01575">
    <property type="taxonomic scope" value="Archaea"/>
</dbReference>
<dbReference type="OrthoDB" id="24266at2157"/>
<dbReference type="Proteomes" id="UP000000752">
    <property type="component" value="Chromosome"/>
</dbReference>
<dbReference type="GO" id="GO:0000177">
    <property type="term" value="C:cytoplasmic exosome (RNase complex)"/>
    <property type="evidence" value="ECO:0007669"/>
    <property type="project" value="TreeGrafter"/>
</dbReference>
<dbReference type="GO" id="GO:0000175">
    <property type="term" value="F:3'-5'-RNA exonuclease activity"/>
    <property type="evidence" value="ECO:0007669"/>
    <property type="project" value="UniProtKB-UniRule"/>
</dbReference>
<dbReference type="GO" id="GO:0003723">
    <property type="term" value="F:RNA binding"/>
    <property type="evidence" value="ECO:0007669"/>
    <property type="project" value="TreeGrafter"/>
</dbReference>
<dbReference type="GO" id="GO:0010467">
    <property type="term" value="P:gene expression"/>
    <property type="evidence" value="ECO:0007669"/>
    <property type="project" value="UniProtKB-ARBA"/>
</dbReference>
<dbReference type="GO" id="GO:0016075">
    <property type="term" value="P:rRNA catabolic process"/>
    <property type="evidence" value="ECO:0007669"/>
    <property type="project" value="TreeGrafter"/>
</dbReference>
<dbReference type="CDD" id="cd11366">
    <property type="entry name" value="RNase_PH_archRRP41"/>
    <property type="match status" value="1"/>
</dbReference>
<dbReference type="FunFam" id="3.30.230.70:FF:000004">
    <property type="entry name" value="Exosome complex component Rrp41"/>
    <property type="match status" value="1"/>
</dbReference>
<dbReference type="Gene3D" id="3.30.230.70">
    <property type="entry name" value="GHMP Kinase, N-terminal domain"/>
    <property type="match status" value="1"/>
</dbReference>
<dbReference type="HAMAP" id="MF_00591">
    <property type="entry name" value="Exosome_Rrp41"/>
    <property type="match status" value="1"/>
</dbReference>
<dbReference type="InterPro" id="IPR001247">
    <property type="entry name" value="ExoRNase_PH_dom1"/>
</dbReference>
<dbReference type="InterPro" id="IPR015847">
    <property type="entry name" value="ExoRNase_PH_dom2"/>
</dbReference>
<dbReference type="InterPro" id="IPR036345">
    <property type="entry name" value="ExoRNase_PH_dom2_sf"/>
</dbReference>
<dbReference type="InterPro" id="IPR027408">
    <property type="entry name" value="PNPase/RNase_PH_dom_sf"/>
</dbReference>
<dbReference type="InterPro" id="IPR020568">
    <property type="entry name" value="Ribosomal_Su5_D2-typ_SF"/>
</dbReference>
<dbReference type="InterPro" id="IPR050080">
    <property type="entry name" value="RNase_PH"/>
</dbReference>
<dbReference type="InterPro" id="IPR011807">
    <property type="entry name" value="Rrp41"/>
</dbReference>
<dbReference type="NCBIfam" id="TIGR02065">
    <property type="entry name" value="ECX1"/>
    <property type="match status" value="1"/>
</dbReference>
<dbReference type="PANTHER" id="PTHR11953">
    <property type="entry name" value="EXOSOME COMPLEX COMPONENT"/>
    <property type="match status" value="1"/>
</dbReference>
<dbReference type="PANTHER" id="PTHR11953:SF0">
    <property type="entry name" value="EXOSOME COMPLEX COMPONENT RRP41"/>
    <property type="match status" value="1"/>
</dbReference>
<dbReference type="Pfam" id="PF01138">
    <property type="entry name" value="RNase_PH"/>
    <property type="match status" value="1"/>
</dbReference>
<dbReference type="Pfam" id="PF03725">
    <property type="entry name" value="RNase_PH_C"/>
    <property type="match status" value="1"/>
</dbReference>
<dbReference type="SUPFAM" id="SSF55666">
    <property type="entry name" value="Ribonuclease PH domain 2-like"/>
    <property type="match status" value="1"/>
</dbReference>
<dbReference type="SUPFAM" id="SSF54211">
    <property type="entry name" value="Ribosomal protein S5 domain 2-like"/>
    <property type="match status" value="1"/>
</dbReference>
<sequence length="249" mass="27825">MMEKPEGLKLIDENGRRIDGRKKYELRPIKMKVGVLKNANGSAYIEWGRNKIIAAVYGPRELHSKHLQRPDRAILRVRYNMAPFSVEERKKPGPDRRSIEISKVIKGALEPALILEMFPRTSIDVFIEVLQADAGTRVAGITAASLALADAGIPMRDLVAACAAGKIEGEIVLDLNKEEDNYGEADVPVAIMPLKNDITLLQMDGYLTKEEFIEAVRLAIKGAKAVYQKQREALKEKYLKIAQEVEESE</sequence>
<feature type="chain" id="PRO_0000139988" description="Exosome complex component Rrp41">
    <location>
        <begin position="1"/>
        <end position="249"/>
    </location>
</feature>
<protein>
    <recommendedName>
        <fullName evidence="1">Exosome complex component Rrp41</fullName>
        <ecNumber evidence="1">3.1.13.-</ecNumber>
    </recommendedName>
</protein>